<name>SYS_COXB1</name>
<evidence type="ECO:0000255" key="1">
    <source>
        <dbReference type="HAMAP-Rule" id="MF_00176"/>
    </source>
</evidence>
<keyword id="KW-0030">Aminoacyl-tRNA synthetase</keyword>
<keyword id="KW-0067">ATP-binding</keyword>
<keyword id="KW-0963">Cytoplasm</keyword>
<keyword id="KW-0436">Ligase</keyword>
<keyword id="KW-0547">Nucleotide-binding</keyword>
<keyword id="KW-0648">Protein biosynthesis</keyword>
<organism>
    <name type="scientific">Coxiella burnetii (strain CbuK_Q154)</name>
    <name type="common">Coxiella burnetii (strain Q154)</name>
    <dbReference type="NCBI Taxonomy" id="434924"/>
    <lineage>
        <taxon>Bacteria</taxon>
        <taxon>Pseudomonadati</taxon>
        <taxon>Pseudomonadota</taxon>
        <taxon>Gammaproteobacteria</taxon>
        <taxon>Legionellales</taxon>
        <taxon>Coxiellaceae</taxon>
        <taxon>Coxiella</taxon>
    </lineage>
</organism>
<sequence length="423" mass="48149">MLDPKILRQNLEHVVEKLRRRGFEMDSDTFLQLENKRKEAQLAIQSFQTKRNQLSKTIGMAKSKGENPEPLMAEVSQLNDELKQEEANFETIQKAFSDFQLAIPNLPHDSVPDGKSENDNREIRQWGAPPGFDFTPKDHTVLGERDNQLDFEAAAKLSGARFVVLRGSLARAHRALAQFMLDLHTDQHGYEEVYVPYLVHEECLYGTGQLPKFREEQFQVAGDRNFFLVPTGEVPLVNLARDEIIEAPALPKKWVAQTPCFRSEAGSYGKDVRGMIRQHQFQKVELVQLVQPENSYQTLEEITRQAEKVLQLLALPYRVVELCAGDLGFAAAKTYDLEVWLPSQNKYREISSCSNCEDFQARRIQARWRNPKTGKPELLHTLNGSGLAVGRTLVAVMENYQQADGHIRVPDALKSYMGGVDYF</sequence>
<proteinExistence type="inferred from homology"/>
<reference key="1">
    <citation type="journal article" date="2009" name="Infect. Immun.">
        <title>Comparative genomics reveal extensive transposon-mediated genomic plasticity and diversity among potential effector proteins within the genus Coxiella.</title>
        <authorList>
            <person name="Beare P.A."/>
            <person name="Unsworth N."/>
            <person name="Andoh M."/>
            <person name="Voth D.E."/>
            <person name="Omsland A."/>
            <person name="Gilk S.D."/>
            <person name="Williams K.P."/>
            <person name="Sobral B.W."/>
            <person name="Kupko J.J. III"/>
            <person name="Porcella S.F."/>
            <person name="Samuel J.E."/>
            <person name="Heinzen R.A."/>
        </authorList>
    </citation>
    <scope>NUCLEOTIDE SEQUENCE [LARGE SCALE GENOMIC DNA]</scope>
    <source>
        <strain>CbuK_Q154</strain>
    </source>
</reference>
<accession>B6J7K7</accession>
<gene>
    <name evidence="1" type="primary">serS</name>
    <name type="ordered locus">CbuK_1053</name>
</gene>
<protein>
    <recommendedName>
        <fullName evidence="1">Serine--tRNA ligase</fullName>
        <ecNumber evidence="1">6.1.1.11</ecNumber>
    </recommendedName>
    <alternativeName>
        <fullName evidence="1">Seryl-tRNA synthetase</fullName>
        <shortName evidence="1">SerRS</shortName>
    </alternativeName>
    <alternativeName>
        <fullName evidence="1">Seryl-tRNA(Ser/Sec) synthetase</fullName>
    </alternativeName>
</protein>
<dbReference type="EC" id="6.1.1.11" evidence="1"/>
<dbReference type="EMBL" id="CP001020">
    <property type="protein sequence ID" value="ACJ20256.1"/>
    <property type="molecule type" value="Genomic_DNA"/>
</dbReference>
<dbReference type="RefSeq" id="WP_005770706.1">
    <property type="nucleotide sequence ID" value="NC_011528.1"/>
</dbReference>
<dbReference type="SMR" id="B6J7K7"/>
<dbReference type="KEGG" id="cbc:CbuK_1053"/>
<dbReference type="HOGENOM" id="CLU_023797_1_1_6"/>
<dbReference type="UniPathway" id="UPA00906">
    <property type="reaction ID" value="UER00895"/>
</dbReference>
<dbReference type="GO" id="GO:0005737">
    <property type="term" value="C:cytoplasm"/>
    <property type="evidence" value="ECO:0007669"/>
    <property type="project" value="UniProtKB-SubCell"/>
</dbReference>
<dbReference type="GO" id="GO:0005524">
    <property type="term" value="F:ATP binding"/>
    <property type="evidence" value="ECO:0007669"/>
    <property type="project" value="UniProtKB-UniRule"/>
</dbReference>
<dbReference type="GO" id="GO:0004828">
    <property type="term" value="F:serine-tRNA ligase activity"/>
    <property type="evidence" value="ECO:0007669"/>
    <property type="project" value="UniProtKB-UniRule"/>
</dbReference>
<dbReference type="GO" id="GO:0016260">
    <property type="term" value="P:selenocysteine biosynthetic process"/>
    <property type="evidence" value="ECO:0007669"/>
    <property type="project" value="UniProtKB-UniRule"/>
</dbReference>
<dbReference type="GO" id="GO:0006434">
    <property type="term" value="P:seryl-tRNA aminoacylation"/>
    <property type="evidence" value="ECO:0007669"/>
    <property type="project" value="UniProtKB-UniRule"/>
</dbReference>
<dbReference type="CDD" id="cd00770">
    <property type="entry name" value="SerRS_core"/>
    <property type="match status" value="1"/>
</dbReference>
<dbReference type="Gene3D" id="3.30.930.10">
    <property type="entry name" value="Bira Bifunctional Protein, Domain 2"/>
    <property type="match status" value="1"/>
</dbReference>
<dbReference type="Gene3D" id="1.10.287.40">
    <property type="entry name" value="Serine-tRNA synthetase, tRNA binding domain"/>
    <property type="match status" value="1"/>
</dbReference>
<dbReference type="HAMAP" id="MF_00176">
    <property type="entry name" value="Ser_tRNA_synth_type1"/>
    <property type="match status" value="1"/>
</dbReference>
<dbReference type="InterPro" id="IPR002314">
    <property type="entry name" value="aa-tRNA-synt_IIb"/>
</dbReference>
<dbReference type="InterPro" id="IPR006195">
    <property type="entry name" value="aa-tRNA-synth_II"/>
</dbReference>
<dbReference type="InterPro" id="IPR045864">
    <property type="entry name" value="aa-tRNA-synth_II/BPL/LPL"/>
</dbReference>
<dbReference type="InterPro" id="IPR002317">
    <property type="entry name" value="Ser-tRNA-ligase_type_1"/>
</dbReference>
<dbReference type="InterPro" id="IPR015866">
    <property type="entry name" value="Ser-tRNA-synth_1_N"/>
</dbReference>
<dbReference type="InterPro" id="IPR042103">
    <property type="entry name" value="SerRS_1_N_sf"/>
</dbReference>
<dbReference type="InterPro" id="IPR033729">
    <property type="entry name" value="SerRS_core"/>
</dbReference>
<dbReference type="InterPro" id="IPR010978">
    <property type="entry name" value="tRNA-bd_arm"/>
</dbReference>
<dbReference type="NCBIfam" id="TIGR00414">
    <property type="entry name" value="serS"/>
    <property type="match status" value="1"/>
</dbReference>
<dbReference type="PANTHER" id="PTHR43697:SF1">
    <property type="entry name" value="SERINE--TRNA LIGASE"/>
    <property type="match status" value="1"/>
</dbReference>
<dbReference type="PANTHER" id="PTHR43697">
    <property type="entry name" value="SERYL-TRNA SYNTHETASE"/>
    <property type="match status" value="1"/>
</dbReference>
<dbReference type="Pfam" id="PF02403">
    <property type="entry name" value="Seryl_tRNA_N"/>
    <property type="match status" value="1"/>
</dbReference>
<dbReference type="Pfam" id="PF00587">
    <property type="entry name" value="tRNA-synt_2b"/>
    <property type="match status" value="1"/>
</dbReference>
<dbReference type="PIRSF" id="PIRSF001529">
    <property type="entry name" value="Ser-tRNA-synth_IIa"/>
    <property type="match status" value="1"/>
</dbReference>
<dbReference type="PRINTS" id="PR00981">
    <property type="entry name" value="TRNASYNTHSER"/>
</dbReference>
<dbReference type="SUPFAM" id="SSF55681">
    <property type="entry name" value="Class II aaRS and biotin synthetases"/>
    <property type="match status" value="1"/>
</dbReference>
<dbReference type="SUPFAM" id="SSF46589">
    <property type="entry name" value="tRNA-binding arm"/>
    <property type="match status" value="1"/>
</dbReference>
<dbReference type="PROSITE" id="PS50862">
    <property type="entry name" value="AA_TRNA_LIGASE_II"/>
    <property type="match status" value="1"/>
</dbReference>
<feature type="chain" id="PRO_1000098056" description="Serine--tRNA ligase">
    <location>
        <begin position="1"/>
        <end position="423"/>
    </location>
</feature>
<feature type="binding site" evidence="1">
    <location>
        <begin position="231"/>
        <end position="233"/>
    </location>
    <ligand>
        <name>L-serine</name>
        <dbReference type="ChEBI" id="CHEBI:33384"/>
    </ligand>
</feature>
<feature type="binding site" evidence="1">
    <location>
        <begin position="262"/>
        <end position="264"/>
    </location>
    <ligand>
        <name>ATP</name>
        <dbReference type="ChEBI" id="CHEBI:30616"/>
    </ligand>
</feature>
<feature type="binding site" evidence="1">
    <location>
        <position position="285"/>
    </location>
    <ligand>
        <name>L-serine</name>
        <dbReference type="ChEBI" id="CHEBI:33384"/>
    </ligand>
</feature>
<feature type="binding site" evidence="1">
    <location>
        <begin position="349"/>
        <end position="352"/>
    </location>
    <ligand>
        <name>ATP</name>
        <dbReference type="ChEBI" id="CHEBI:30616"/>
    </ligand>
</feature>
<feature type="binding site" evidence="1">
    <location>
        <position position="385"/>
    </location>
    <ligand>
        <name>L-serine</name>
        <dbReference type="ChEBI" id="CHEBI:33384"/>
    </ligand>
</feature>
<comment type="function">
    <text evidence="1">Catalyzes the attachment of serine to tRNA(Ser). Is also able to aminoacylate tRNA(Sec) with serine, to form the misacylated tRNA L-seryl-tRNA(Sec), which will be further converted into selenocysteinyl-tRNA(Sec).</text>
</comment>
<comment type="catalytic activity">
    <reaction evidence="1">
        <text>tRNA(Ser) + L-serine + ATP = L-seryl-tRNA(Ser) + AMP + diphosphate + H(+)</text>
        <dbReference type="Rhea" id="RHEA:12292"/>
        <dbReference type="Rhea" id="RHEA-COMP:9669"/>
        <dbReference type="Rhea" id="RHEA-COMP:9703"/>
        <dbReference type="ChEBI" id="CHEBI:15378"/>
        <dbReference type="ChEBI" id="CHEBI:30616"/>
        <dbReference type="ChEBI" id="CHEBI:33019"/>
        <dbReference type="ChEBI" id="CHEBI:33384"/>
        <dbReference type="ChEBI" id="CHEBI:78442"/>
        <dbReference type="ChEBI" id="CHEBI:78533"/>
        <dbReference type="ChEBI" id="CHEBI:456215"/>
        <dbReference type="EC" id="6.1.1.11"/>
    </reaction>
</comment>
<comment type="catalytic activity">
    <reaction evidence="1">
        <text>tRNA(Sec) + L-serine + ATP = L-seryl-tRNA(Sec) + AMP + diphosphate + H(+)</text>
        <dbReference type="Rhea" id="RHEA:42580"/>
        <dbReference type="Rhea" id="RHEA-COMP:9742"/>
        <dbReference type="Rhea" id="RHEA-COMP:10128"/>
        <dbReference type="ChEBI" id="CHEBI:15378"/>
        <dbReference type="ChEBI" id="CHEBI:30616"/>
        <dbReference type="ChEBI" id="CHEBI:33019"/>
        <dbReference type="ChEBI" id="CHEBI:33384"/>
        <dbReference type="ChEBI" id="CHEBI:78442"/>
        <dbReference type="ChEBI" id="CHEBI:78533"/>
        <dbReference type="ChEBI" id="CHEBI:456215"/>
        <dbReference type="EC" id="6.1.1.11"/>
    </reaction>
</comment>
<comment type="pathway">
    <text evidence="1">Aminoacyl-tRNA biosynthesis; selenocysteinyl-tRNA(Sec) biosynthesis; L-seryl-tRNA(Sec) from L-serine and tRNA(Sec): step 1/1.</text>
</comment>
<comment type="subunit">
    <text evidence="1">Homodimer. The tRNA molecule binds across the dimer.</text>
</comment>
<comment type="subcellular location">
    <subcellularLocation>
        <location evidence="1">Cytoplasm</location>
    </subcellularLocation>
</comment>
<comment type="domain">
    <text evidence="1">Consists of two distinct domains, a catalytic core and a N-terminal extension that is involved in tRNA binding.</text>
</comment>
<comment type="similarity">
    <text evidence="1">Belongs to the class-II aminoacyl-tRNA synthetase family. Type-1 seryl-tRNA synthetase subfamily.</text>
</comment>